<evidence type="ECO:0000255" key="1"/>
<evidence type="ECO:0000255" key="2">
    <source>
        <dbReference type="PROSITE-ProRule" id="PRU00521"/>
    </source>
</evidence>
<evidence type="ECO:0000305" key="3"/>
<evidence type="ECO:0000312" key="4">
    <source>
        <dbReference type="MGI" id="MGI:3030843"/>
    </source>
</evidence>
<gene>
    <name evidence="4" type="primary">Or5g9</name>
    <name evidence="4" type="synonym">Mor175-3</name>
    <name evidence="4" type="synonym">Olfr1009</name>
</gene>
<name>OR5G9_MOUSE</name>
<dbReference type="EMBL" id="AY073525">
    <property type="protein sequence ID" value="AAL61188.1"/>
    <property type="molecule type" value="Genomic_DNA"/>
</dbReference>
<dbReference type="EMBL" id="AY318204">
    <property type="protein sequence ID" value="AAP71461.1"/>
    <property type="molecule type" value="Genomic_DNA"/>
</dbReference>
<dbReference type="CCDS" id="CCDS16216.1"/>
<dbReference type="RefSeq" id="NP_666783.1">
    <property type="nucleotide sequence ID" value="NM_146572.2"/>
</dbReference>
<dbReference type="SMR" id="Q8VFK1"/>
<dbReference type="FunCoup" id="Q8VFK1">
    <property type="interactions" value="1251"/>
</dbReference>
<dbReference type="STRING" id="10090.ENSMUSP00000150450"/>
<dbReference type="GlyCosmos" id="Q8VFK1">
    <property type="glycosylation" value="1 site, No reported glycans"/>
</dbReference>
<dbReference type="GlyGen" id="Q8VFK1">
    <property type="glycosylation" value="1 site"/>
</dbReference>
<dbReference type="PaxDb" id="10090-ENSMUSP00000061475"/>
<dbReference type="DNASU" id="258565"/>
<dbReference type="Ensembl" id="ENSMUST00000055517.3">
    <property type="protein sequence ID" value="ENSMUSP00000061475.3"/>
    <property type="gene ID" value="ENSMUSG00000043226.6"/>
</dbReference>
<dbReference type="Ensembl" id="ENSMUST00000216443.3">
    <property type="protein sequence ID" value="ENSMUSP00000150450.2"/>
    <property type="gene ID" value="ENSMUSG00000043226.6"/>
</dbReference>
<dbReference type="GeneID" id="258565"/>
<dbReference type="KEGG" id="mmu:258565"/>
<dbReference type="UCSC" id="uc008kkr.1">
    <property type="organism name" value="mouse"/>
</dbReference>
<dbReference type="AGR" id="MGI:3030843"/>
<dbReference type="CTD" id="258565"/>
<dbReference type="MGI" id="MGI:3030843">
    <property type="gene designation" value="Or5g9"/>
</dbReference>
<dbReference type="VEuPathDB" id="HostDB:ENSMUSG00000043226"/>
<dbReference type="eggNOG" id="ENOG502RF13">
    <property type="taxonomic scope" value="Eukaryota"/>
</dbReference>
<dbReference type="GeneTree" id="ENSGT01120000271831"/>
<dbReference type="HOGENOM" id="CLU_012526_1_0_1"/>
<dbReference type="InParanoid" id="Q8VFK1"/>
<dbReference type="OMA" id="HPRMQVF"/>
<dbReference type="OrthoDB" id="9823959at2759"/>
<dbReference type="PhylomeDB" id="Q8VFK1"/>
<dbReference type="TreeFam" id="TF352753"/>
<dbReference type="BioGRID-ORCS" id="258565">
    <property type="hits" value="1 hit in 70 CRISPR screens"/>
</dbReference>
<dbReference type="PRO" id="PR:Q8VFK1"/>
<dbReference type="Proteomes" id="UP000000589">
    <property type="component" value="Chromosome 2"/>
</dbReference>
<dbReference type="RNAct" id="Q8VFK1">
    <property type="molecule type" value="protein"/>
</dbReference>
<dbReference type="ExpressionAtlas" id="Q8VFK1">
    <property type="expression patterns" value="differential"/>
</dbReference>
<dbReference type="GO" id="GO:0016020">
    <property type="term" value="C:membrane"/>
    <property type="evidence" value="ECO:0000247"/>
    <property type="project" value="MGI"/>
</dbReference>
<dbReference type="GO" id="GO:0005886">
    <property type="term" value="C:plasma membrane"/>
    <property type="evidence" value="ECO:0007669"/>
    <property type="project" value="UniProtKB-SubCell"/>
</dbReference>
<dbReference type="GO" id="GO:0004930">
    <property type="term" value="F:G protein-coupled receptor activity"/>
    <property type="evidence" value="ECO:0007669"/>
    <property type="project" value="UniProtKB-KW"/>
</dbReference>
<dbReference type="GO" id="GO:0004984">
    <property type="term" value="F:olfactory receptor activity"/>
    <property type="evidence" value="ECO:0000247"/>
    <property type="project" value="MGI"/>
</dbReference>
<dbReference type="GO" id="GO:0007186">
    <property type="term" value="P:G protein-coupled receptor signaling pathway"/>
    <property type="evidence" value="ECO:0000247"/>
    <property type="project" value="MGI"/>
</dbReference>
<dbReference type="GO" id="GO:0007608">
    <property type="term" value="P:sensory perception of smell"/>
    <property type="evidence" value="ECO:0000247"/>
    <property type="project" value="MGI"/>
</dbReference>
<dbReference type="CDD" id="cd15414">
    <property type="entry name" value="7tmA_OR5G-like"/>
    <property type="match status" value="1"/>
</dbReference>
<dbReference type="FunFam" id="1.20.1070.10:FF:000003">
    <property type="entry name" value="Olfactory receptor"/>
    <property type="match status" value="1"/>
</dbReference>
<dbReference type="Gene3D" id="1.20.1070.10">
    <property type="entry name" value="Rhodopsin 7-helix transmembrane proteins"/>
    <property type="match status" value="1"/>
</dbReference>
<dbReference type="InterPro" id="IPR000276">
    <property type="entry name" value="GPCR_Rhodpsn"/>
</dbReference>
<dbReference type="InterPro" id="IPR017452">
    <property type="entry name" value="GPCR_Rhodpsn_7TM"/>
</dbReference>
<dbReference type="InterPro" id="IPR000725">
    <property type="entry name" value="Olfact_rcpt"/>
</dbReference>
<dbReference type="PANTHER" id="PTHR48018">
    <property type="entry name" value="OLFACTORY RECEPTOR"/>
    <property type="match status" value="1"/>
</dbReference>
<dbReference type="Pfam" id="PF13853">
    <property type="entry name" value="7tm_4"/>
    <property type="match status" value="1"/>
</dbReference>
<dbReference type="PRINTS" id="PR00237">
    <property type="entry name" value="GPCRRHODOPSN"/>
</dbReference>
<dbReference type="PRINTS" id="PR00245">
    <property type="entry name" value="OLFACTORYR"/>
</dbReference>
<dbReference type="SUPFAM" id="SSF81321">
    <property type="entry name" value="Family A G protein-coupled receptor-like"/>
    <property type="match status" value="1"/>
</dbReference>
<dbReference type="PROSITE" id="PS00237">
    <property type="entry name" value="G_PROTEIN_RECEP_F1_1"/>
    <property type="match status" value="1"/>
</dbReference>
<dbReference type="PROSITE" id="PS50262">
    <property type="entry name" value="G_PROTEIN_RECEP_F1_2"/>
    <property type="match status" value="1"/>
</dbReference>
<proteinExistence type="inferred from homology"/>
<reference key="1">
    <citation type="journal article" date="2002" name="Nat. Neurosci.">
        <title>The olfactory receptor gene superfamily of the mouse.</title>
        <authorList>
            <person name="Zhang X."/>
            <person name="Firestein S."/>
        </authorList>
    </citation>
    <scope>NUCLEOTIDE SEQUENCE [GENOMIC DNA]</scope>
</reference>
<reference key="2">
    <citation type="journal article" date="2002" name="Hum. Mol. Genet.">
        <title>Different evolutionary processes shaped the mouse and human olfactory receptor gene families.</title>
        <authorList>
            <person name="Young J.M."/>
            <person name="Friedman C."/>
            <person name="Williams E.M."/>
            <person name="Ross J.A."/>
            <person name="Tonnes-Priddy L."/>
            <person name="Trask B.J."/>
        </authorList>
    </citation>
    <scope>NUCLEOTIDE SEQUENCE [GENOMIC DNA]</scope>
</reference>
<reference key="3">
    <citation type="journal article" date="2002" name="Hum. Mol. Genet.">
        <authorList>
            <person name="Young J.M."/>
            <person name="Friedman C."/>
            <person name="Williams E.M."/>
            <person name="Ross J.A."/>
            <person name="Tonnes-Priddy L."/>
            <person name="Trask B.J."/>
        </authorList>
    </citation>
    <scope>ERRATUM OF PUBMED:11875048</scope>
</reference>
<keyword id="KW-1003">Cell membrane</keyword>
<keyword id="KW-1015">Disulfide bond</keyword>
<keyword id="KW-0297">G-protein coupled receptor</keyword>
<keyword id="KW-0325">Glycoprotein</keyword>
<keyword id="KW-0472">Membrane</keyword>
<keyword id="KW-0552">Olfaction</keyword>
<keyword id="KW-0675">Receptor</keyword>
<keyword id="KW-1185">Reference proteome</keyword>
<keyword id="KW-0716">Sensory transduction</keyword>
<keyword id="KW-0807">Transducer</keyword>
<keyword id="KW-0812">Transmembrane</keyword>
<keyword id="KW-1133">Transmembrane helix</keyword>
<protein>
    <recommendedName>
        <fullName evidence="3">Olfactory receptor 5G9</fullName>
    </recommendedName>
    <alternativeName>
        <fullName>Olfactory receptor 1009</fullName>
    </alternativeName>
    <alternativeName>
        <fullName>Olfactory receptor 175-3</fullName>
    </alternativeName>
</protein>
<feature type="chain" id="PRO_0000150859" description="Olfactory receptor 5G9">
    <location>
        <begin position="1"/>
        <end position="314"/>
    </location>
</feature>
<feature type="topological domain" description="Extracellular" evidence="1">
    <location>
        <begin position="1"/>
        <end position="25"/>
    </location>
</feature>
<feature type="transmembrane region" description="Helical; Name=1" evidence="1">
    <location>
        <begin position="26"/>
        <end position="46"/>
    </location>
</feature>
<feature type="topological domain" description="Cytoplasmic" evidence="1">
    <location>
        <begin position="47"/>
        <end position="54"/>
    </location>
</feature>
<feature type="transmembrane region" description="Helical; Name=2" evidence="1">
    <location>
        <begin position="55"/>
        <end position="75"/>
    </location>
</feature>
<feature type="topological domain" description="Extracellular" evidence="1">
    <location>
        <begin position="76"/>
        <end position="99"/>
    </location>
</feature>
<feature type="transmembrane region" description="Helical; Name=3" evidence="1">
    <location>
        <begin position="100"/>
        <end position="120"/>
    </location>
</feature>
<feature type="topological domain" description="Cytoplasmic" evidence="1">
    <location>
        <begin position="121"/>
        <end position="133"/>
    </location>
</feature>
<feature type="transmembrane region" description="Helical; Name=4" evidence="1">
    <location>
        <begin position="134"/>
        <end position="154"/>
    </location>
</feature>
<feature type="topological domain" description="Extracellular" evidence="1">
    <location>
        <begin position="155"/>
        <end position="196"/>
    </location>
</feature>
<feature type="transmembrane region" description="Helical; Name=5" evidence="1">
    <location>
        <begin position="197"/>
        <end position="217"/>
    </location>
</feature>
<feature type="topological domain" description="Cytoplasmic" evidence="1">
    <location>
        <begin position="218"/>
        <end position="237"/>
    </location>
</feature>
<feature type="transmembrane region" description="Helical; Name=6" evidence="1">
    <location>
        <begin position="238"/>
        <end position="258"/>
    </location>
</feature>
<feature type="topological domain" description="Extracellular" evidence="1">
    <location>
        <begin position="259"/>
        <end position="271"/>
    </location>
</feature>
<feature type="transmembrane region" description="Helical; Name=7" evidence="1">
    <location>
        <begin position="272"/>
        <end position="292"/>
    </location>
</feature>
<feature type="topological domain" description="Cytoplasmic" evidence="1">
    <location>
        <begin position="293"/>
        <end position="314"/>
    </location>
</feature>
<feature type="glycosylation site" description="N-linked (GlcNAc...) asparagine" evidence="1">
    <location>
        <position position="5"/>
    </location>
</feature>
<feature type="disulfide bond" evidence="2">
    <location>
        <begin position="97"/>
        <end position="189"/>
    </location>
</feature>
<organism>
    <name type="scientific">Mus musculus</name>
    <name type="common">Mouse</name>
    <dbReference type="NCBI Taxonomy" id="10090"/>
    <lineage>
        <taxon>Eukaryota</taxon>
        <taxon>Metazoa</taxon>
        <taxon>Chordata</taxon>
        <taxon>Craniata</taxon>
        <taxon>Vertebrata</taxon>
        <taxon>Euteleostomi</taxon>
        <taxon>Mammalia</taxon>
        <taxon>Eutheria</taxon>
        <taxon>Euarchontoglires</taxon>
        <taxon>Glires</taxon>
        <taxon>Rodentia</taxon>
        <taxon>Myomorpha</taxon>
        <taxon>Muroidea</taxon>
        <taxon>Muridae</taxon>
        <taxon>Murinae</taxon>
        <taxon>Mus</taxon>
        <taxon>Mus</taxon>
    </lineage>
</organism>
<accession>Q8VFK1</accession>
<comment type="function">
    <text>Potential odorant receptor.</text>
</comment>
<comment type="subcellular location">
    <subcellularLocation>
        <location evidence="3">Cell membrane</location>
        <topology evidence="1">Multi-pass membrane protein</topology>
    </subcellularLocation>
</comment>
<comment type="similarity">
    <text evidence="2">Belongs to the G-protein coupled receptor 1 family.</text>
</comment>
<sequence>MADENYTRITEFIFIGLRYHPNLQVFLFLLFLLFYLVTMTGNLGMIILIRVDSRLHTPMYFFLSHLSFVDICFSSVVAPKMLTDFFADKKAISFLGCVLQQWFFGFFVAIECLLLASMAYDRYVAICNPLLYSVAMSQRLCIQLVIGPYAVGFFNTMTHTTAAFRLPFCGSNIINHFFCDMSPILSLICADIRINKLLVFIVAGAVLIVSSTTIIVSYFHILIAILRIRSAEGRRKAFSTCSSHVTAVSILYGTLFFIYVRPSAISSLDLNKVVSVFYTAVIPMLNPLIYSLRNKEVKSAMGRTVAKAKVFLKN</sequence>